<dbReference type="EC" id="2.8.1.-" evidence="1"/>
<dbReference type="EMBL" id="CP000872">
    <property type="protein sequence ID" value="ABX61911.1"/>
    <property type="molecule type" value="Genomic_DNA"/>
</dbReference>
<dbReference type="RefSeq" id="WP_002969416.1">
    <property type="nucleotide sequence ID" value="NC_010103.1"/>
</dbReference>
<dbReference type="SMR" id="A9MAK8"/>
<dbReference type="GeneID" id="93016786"/>
<dbReference type="KEGG" id="bcs:BCAN_A0846"/>
<dbReference type="HOGENOM" id="CLU_026481_0_0_5"/>
<dbReference type="PhylomeDB" id="A9MAK8"/>
<dbReference type="Proteomes" id="UP000001385">
    <property type="component" value="Chromosome I"/>
</dbReference>
<dbReference type="GO" id="GO:0005737">
    <property type="term" value="C:cytoplasm"/>
    <property type="evidence" value="ECO:0007669"/>
    <property type="project" value="UniProtKB-SubCell"/>
</dbReference>
<dbReference type="GO" id="GO:0051539">
    <property type="term" value="F:4 iron, 4 sulfur cluster binding"/>
    <property type="evidence" value="ECO:0007669"/>
    <property type="project" value="UniProtKB-UniRule"/>
</dbReference>
<dbReference type="GO" id="GO:0005524">
    <property type="term" value="F:ATP binding"/>
    <property type="evidence" value="ECO:0007669"/>
    <property type="project" value="UniProtKB-UniRule"/>
</dbReference>
<dbReference type="GO" id="GO:0000287">
    <property type="term" value="F:magnesium ion binding"/>
    <property type="evidence" value="ECO:0007669"/>
    <property type="project" value="UniProtKB-UniRule"/>
</dbReference>
<dbReference type="GO" id="GO:0016783">
    <property type="term" value="F:sulfurtransferase activity"/>
    <property type="evidence" value="ECO:0007669"/>
    <property type="project" value="UniProtKB-UniRule"/>
</dbReference>
<dbReference type="GO" id="GO:0000049">
    <property type="term" value="F:tRNA binding"/>
    <property type="evidence" value="ECO:0007669"/>
    <property type="project" value="UniProtKB-KW"/>
</dbReference>
<dbReference type="GO" id="GO:0034227">
    <property type="term" value="P:tRNA thio-modification"/>
    <property type="evidence" value="ECO:0007669"/>
    <property type="project" value="UniProtKB-UniRule"/>
</dbReference>
<dbReference type="CDD" id="cd24138">
    <property type="entry name" value="TtcA-like"/>
    <property type="match status" value="1"/>
</dbReference>
<dbReference type="Gene3D" id="3.40.50.620">
    <property type="entry name" value="HUPs"/>
    <property type="match status" value="1"/>
</dbReference>
<dbReference type="HAMAP" id="MF_01850">
    <property type="entry name" value="TtcA"/>
    <property type="match status" value="1"/>
</dbReference>
<dbReference type="InterPro" id="IPR014729">
    <property type="entry name" value="Rossmann-like_a/b/a_fold"/>
</dbReference>
<dbReference type="InterPro" id="IPR011063">
    <property type="entry name" value="TilS/TtcA_N"/>
</dbReference>
<dbReference type="InterPro" id="IPR012089">
    <property type="entry name" value="tRNA_Cyd_32_2_STrfase"/>
</dbReference>
<dbReference type="InterPro" id="IPR035107">
    <property type="entry name" value="tRNA_thiolation_TtcA_Ctu1"/>
</dbReference>
<dbReference type="NCBIfam" id="NF007972">
    <property type="entry name" value="PRK10696.1"/>
    <property type="match status" value="1"/>
</dbReference>
<dbReference type="PANTHER" id="PTHR43686:SF1">
    <property type="entry name" value="AMINOTRAN_5 DOMAIN-CONTAINING PROTEIN"/>
    <property type="match status" value="1"/>
</dbReference>
<dbReference type="PANTHER" id="PTHR43686">
    <property type="entry name" value="SULFURTRANSFERASE-RELATED"/>
    <property type="match status" value="1"/>
</dbReference>
<dbReference type="Pfam" id="PF01171">
    <property type="entry name" value="ATP_bind_3"/>
    <property type="match status" value="1"/>
</dbReference>
<dbReference type="PIRSF" id="PIRSF004976">
    <property type="entry name" value="ATPase_YdaO"/>
    <property type="match status" value="1"/>
</dbReference>
<dbReference type="SUPFAM" id="SSF52402">
    <property type="entry name" value="Adenine nucleotide alpha hydrolases-like"/>
    <property type="match status" value="1"/>
</dbReference>
<comment type="function">
    <text evidence="1">Catalyzes the ATP-dependent 2-thiolation of cytidine in position 32 of tRNA, to form 2-thiocytidine (s(2)C32). The sulfur atoms are provided by the cysteine/cysteine desulfurase (IscS) system.</text>
</comment>
<comment type="catalytic activity">
    <reaction evidence="1">
        <text>cytidine(32) in tRNA + S-sulfanyl-L-cysteinyl-[cysteine desulfurase] + AH2 + ATP = 2-thiocytidine(32) in tRNA + L-cysteinyl-[cysteine desulfurase] + A + AMP + diphosphate + H(+)</text>
        <dbReference type="Rhea" id="RHEA:57048"/>
        <dbReference type="Rhea" id="RHEA-COMP:10288"/>
        <dbReference type="Rhea" id="RHEA-COMP:12157"/>
        <dbReference type="Rhea" id="RHEA-COMP:12158"/>
        <dbReference type="Rhea" id="RHEA-COMP:14821"/>
        <dbReference type="ChEBI" id="CHEBI:13193"/>
        <dbReference type="ChEBI" id="CHEBI:15378"/>
        <dbReference type="ChEBI" id="CHEBI:17499"/>
        <dbReference type="ChEBI" id="CHEBI:29950"/>
        <dbReference type="ChEBI" id="CHEBI:30616"/>
        <dbReference type="ChEBI" id="CHEBI:33019"/>
        <dbReference type="ChEBI" id="CHEBI:61963"/>
        <dbReference type="ChEBI" id="CHEBI:82748"/>
        <dbReference type="ChEBI" id="CHEBI:141453"/>
        <dbReference type="ChEBI" id="CHEBI:456215"/>
    </reaction>
    <physiologicalReaction direction="left-to-right" evidence="1">
        <dbReference type="Rhea" id="RHEA:57049"/>
    </physiologicalReaction>
</comment>
<comment type="cofactor">
    <cofactor evidence="1">
        <name>Mg(2+)</name>
        <dbReference type="ChEBI" id="CHEBI:18420"/>
    </cofactor>
</comment>
<comment type="cofactor">
    <cofactor evidence="1">
        <name>[4Fe-4S] cluster</name>
        <dbReference type="ChEBI" id="CHEBI:49883"/>
    </cofactor>
    <text evidence="1">Binds 1 [4Fe-4S] cluster per subunit. The cluster is chelated by three Cys residues, the fourth Fe has a free coordination site that may bind a sulfur atom transferred from the persulfide of IscS.</text>
</comment>
<comment type="pathway">
    <text evidence="1">tRNA modification.</text>
</comment>
<comment type="subunit">
    <text evidence="1">Homodimer.</text>
</comment>
<comment type="subcellular location">
    <subcellularLocation>
        <location evidence="1">Cytoplasm</location>
    </subcellularLocation>
</comment>
<comment type="miscellaneous">
    <text evidence="1">The thiolation reaction likely consists of two steps: a first activation step by ATP to form an adenylated intermediate of the target base of tRNA, and a second nucleophilic substitution step of the sulfur (S) atom supplied by the hydrosulfide attached to the Fe-S cluster.</text>
</comment>
<comment type="similarity">
    <text evidence="1">Belongs to the TtcA family.</text>
</comment>
<gene>
    <name evidence="1" type="primary">ttcA</name>
    <name type="ordered locus">BCAN_A0846</name>
</gene>
<feature type="chain" id="PRO_0000348674" description="tRNA-cytidine(32) 2-sulfurtransferase">
    <location>
        <begin position="1"/>
        <end position="293"/>
    </location>
</feature>
<feature type="short sequence motif" description="PP-loop motif" evidence="1">
    <location>
        <begin position="62"/>
        <end position="67"/>
    </location>
</feature>
<feature type="binding site" evidence="1">
    <location>
        <position position="137"/>
    </location>
    <ligand>
        <name>[4Fe-4S] cluster</name>
        <dbReference type="ChEBI" id="CHEBI:49883"/>
    </ligand>
</feature>
<feature type="binding site" evidence="1">
    <location>
        <position position="140"/>
    </location>
    <ligand>
        <name>[4Fe-4S] cluster</name>
        <dbReference type="ChEBI" id="CHEBI:49883"/>
    </ligand>
</feature>
<feature type="binding site" evidence="1">
    <location>
        <position position="228"/>
    </location>
    <ligand>
        <name>[4Fe-4S] cluster</name>
        <dbReference type="ChEBI" id="CHEBI:49883"/>
    </ligand>
</feature>
<proteinExistence type="inferred from homology"/>
<organism>
    <name type="scientific">Brucella canis (strain ATCC 23365 / NCTC 10854 / RM-666)</name>
    <dbReference type="NCBI Taxonomy" id="483179"/>
    <lineage>
        <taxon>Bacteria</taxon>
        <taxon>Pseudomonadati</taxon>
        <taxon>Pseudomonadota</taxon>
        <taxon>Alphaproteobacteria</taxon>
        <taxon>Hyphomicrobiales</taxon>
        <taxon>Brucellaceae</taxon>
        <taxon>Brucella/Ochrobactrum group</taxon>
        <taxon>Brucella</taxon>
    </lineage>
</organism>
<protein>
    <recommendedName>
        <fullName evidence="1">tRNA-cytidine(32) 2-sulfurtransferase</fullName>
        <ecNumber evidence="1">2.8.1.-</ecNumber>
    </recommendedName>
    <alternativeName>
        <fullName evidence="1">Two-thiocytidine biosynthesis protein A</fullName>
    </alternativeName>
    <alternativeName>
        <fullName evidence="1">tRNA 2-thiocytidine biosynthesis protein TtcA</fullName>
    </alternativeName>
</protein>
<keyword id="KW-0004">4Fe-4S</keyword>
<keyword id="KW-0067">ATP-binding</keyword>
<keyword id="KW-0963">Cytoplasm</keyword>
<keyword id="KW-0408">Iron</keyword>
<keyword id="KW-0411">Iron-sulfur</keyword>
<keyword id="KW-0460">Magnesium</keyword>
<keyword id="KW-0479">Metal-binding</keyword>
<keyword id="KW-0547">Nucleotide-binding</keyword>
<keyword id="KW-1185">Reference proteome</keyword>
<keyword id="KW-0694">RNA-binding</keyword>
<keyword id="KW-0808">Transferase</keyword>
<keyword id="KW-0819">tRNA processing</keyword>
<keyword id="KW-0820">tRNA-binding</keyword>
<evidence type="ECO:0000255" key="1">
    <source>
        <dbReference type="HAMAP-Rule" id="MF_01850"/>
    </source>
</evidence>
<reference key="1">
    <citation type="submission" date="2007-10" db="EMBL/GenBank/DDBJ databases">
        <title>Brucella canis ATCC 23365 whole genome shotgun sequencing project.</title>
        <authorList>
            <person name="Setubal J.C."/>
            <person name="Bowns C."/>
            <person name="Boyle S."/>
            <person name="Crasta O.R."/>
            <person name="Czar M.J."/>
            <person name="Dharmanolla C."/>
            <person name="Gillespie J.J."/>
            <person name="Kenyon R.W."/>
            <person name="Lu J."/>
            <person name="Mane S."/>
            <person name="Mohapatra S."/>
            <person name="Nagrani S."/>
            <person name="Purkayastha A."/>
            <person name="Rajasimha H.K."/>
            <person name="Shallom J.M."/>
            <person name="Shallom S."/>
            <person name="Shukla M."/>
            <person name="Snyder E.E."/>
            <person name="Sobral B.W."/>
            <person name="Wattam A.R."/>
            <person name="Will R."/>
            <person name="Williams K."/>
            <person name="Yoo H."/>
            <person name="Bruce D."/>
            <person name="Detter C."/>
            <person name="Munk C."/>
            <person name="Brettin T.S."/>
        </authorList>
    </citation>
    <scope>NUCLEOTIDE SEQUENCE [LARGE SCALE GENOMIC DNA]</scope>
    <source>
        <strain>ATCC 23365 / NCTC 10854 / RM-666</strain>
    </source>
</reference>
<accession>A9MAK8</accession>
<sequence>MNAFDADITEHADSSGCHPLFRDVPATVEFNKLRKRLLRLTRQAIEDFAMVKPGDRWMVCLSGGKDSYGLLALLLDLKWRGLLPVELLAVNLDQGQPNFPKHILPDFLTRYGIEHRIEYQDTYSIVTDKLPETSTYCSLCSRLRRGNLYRIAREEGCSAIVLGHHREDILETFFMNLFHGGRLAAMPPKLLNDEGDLMVFRPLAYAAEDDLEKFANAMQFPIIPCDLCGSQDGLQRNAMKAMLIDIEKRMPGRKDTMIRALTNVRPSHLLDRKLFDFAGLMANGEKGSDDALW</sequence>
<name>TTCA_BRUC2</name>